<name>RL28_DESAL</name>
<gene>
    <name evidence="1" type="primary">rpmB</name>
    <name type="ordered locus">Dalk_2403</name>
</gene>
<proteinExistence type="inferred from homology"/>
<protein>
    <recommendedName>
        <fullName evidence="1">Large ribosomal subunit protein bL28</fullName>
    </recommendedName>
    <alternativeName>
        <fullName evidence="2">50S ribosomal protein L28</fullName>
    </alternativeName>
</protein>
<organism>
    <name type="scientific">Desulfatibacillum aliphaticivorans</name>
    <dbReference type="NCBI Taxonomy" id="218208"/>
    <lineage>
        <taxon>Bacteria</taxon>
        <taxon>Pseudomonadati</taxon>
        <taxon>Thermodesulfobacteriota</taxon>
        <taxon>Desulfobacteria</taxon>
        <taxon>Desulfobacterales</taxon>
        <taxon>Desulfatibacillaceae</taxon>
        <taxon>Desulfatibacillum</taxon>
    </lineage>
</organism>
<comment type="similarity">
    <text evidence="1">Belongs to the bacterial ribosomal protein bL28 family.</text>
</comment>
<keyword id="KW-1185">Reference proteome</keyword>
<keyword id="KW-0687">Ribonucleoprotein</keyword>
<keyword id="KW-0689">Ribosomal protein</keyword>
<accession>B8FB10</accession>
<reference key="1">
    <citation type="journal article" date="2012" name="Environ. Microbiol.">
        <title>The genome sequence of Desulfatibacillum alkenivorans AK-01: a blueprint for anaerobic alkane oxidation.</title>
        <authorList>
            <person name="Callaghan A.V."/>
            <person name="Morris B.E."/>
            <person name="Pereira I.A."/>
            <person name="McInerney M.J."/>
            <person name="Austin R.N."/>
            <person name="Groves J.T."/>
            <person name="Kukor J.J."/>
            <person name="Suflita J.M."/>
            <person name="Young L.Y."/>
            <person name="Zylstra G.J."/>
            <person name="Wawrik B."/>
        </authorList>
    </citation>
    <scope>NUCLEOTIDE SEQUENCE [LARGE SCALE GENOMIC DNA]</scope>
    <source>
        <strain>AK-01</strain>
    </source>
</reference>
<evidence type="ECO:0000255" key="1">
    <source>
        <dbReference type="HAMAP-Rule" id="MF_00373"/>
    </source>
</evidence>
<evidence type="ECO:0000305" key="2"/>
<dbReference type="EMBL" id="CP001322">
    <property type="protein sequence ID" value="ACL04096.1"/>
    <property type="molecule type" value="Genomic_DNA"/>
</dbReference>
<dbReference type="RefSeq" id="WP_015947170.1">
    <property type="nucleotide sequence ID" value="NC_011768.1"/>
</dbReference>
<dbReference type="SMR" id="B8FB10"/>
<dbReference type="KEGG" id="dal:Dalk_2403"/>
<dbReference type="eggNOG" id="COG0227">
    <property type="taxonomic scope" value="Bacteria"/>
</dbReference>
<dbReference type="HOGENOM" id="CLU_064548_7_0_7"/>
<dbReference type="Proteomes" id="UP000000739">
    <property type="component" value="Chromosome"/>
</dbReference>
<dbReference type="GO" id="GO:1990904">
    <property type="term" value="C:ribonucleoprotein complex"/>
    <property type="evidence" value="ECO:0007669"/>
    <property type="project" value="UniProtKB-KW"/>
</dbReference>
<dbReference type="GO" id="GO:0005840">
    <property type="term" value="C:ribosome"/>
    <property type="evidence" value="ECO:0007669"/>
    <property type="project" value="UniProtKB-KW"/>
</dbReference>
<dbReference type="GO" id="GO:0003735">
    <property type="term" value="F:structural constituent of ribosome"/>
    <property type="evidence" value="ECO:0007669"/>
    <property type="project" value="InterPro"/>
</dbReference>
<dbReference type="GO" id="GO:0006412">
    <property type="term" value="P:translation"/>
    <property type="evidence" value="ECO:0007669"/>
    <property type="project" value="UniProtKB-UniRule"/>
</dbReference>
<dbReference type="Gene3D" id="2.20.150.30">
    <property type="match status" value="1"/>
</dbReference>
<dbReference type="Gene3D" id="2.30.170.40">
    <property type="entry name" value="Ribosomal protein L28/L24"/>
    <property type="match status" value="1"/>
</dbReference>
<dbReference type="HAMAP" id="MF_00373">
    <property type="entry name" value="Ribosomal_bL28"/>
    <property type="match status" value="1"/>
</dbReference>
<dbReference type="InterPro" id="IPR050096">
    <property type="entry name" value="Bacterial_rp_bL28"/>
</dbReference>
<dbReference type="InterPro" id="IPR026569">
    <property type="entry name" value="Ribosomal_bL28"/>
</dbReference>
<dbReference type="InterPro" id="IPR034704">
    <property type="entry name" value="Ribosomal_bL28/bL31-like_sf"/>
</dbReference>
<dbReference type="InterPro" id="IPR001383">
    <property type="entry name" value="Ribosomal_bL28_bact-type"/>
</dbReference>
<dbReference type="InterPro" id="IPR037147">
    <property type="entry name" value="Ribosomal_bL28_sf"/>
</dbReference>
<dbReference type="NCBIfam" id="TIGR00009">
    <property type="entry name" value="L28"/>
    <property type="match status" value="1"/>
</dbReference>
<dbReference type="PANTHER" id="PTHR39080">
    <property type="entry name" value="50S RIBOSOMAL PROTEIN L28"/>
    <property type="match status" value="1"/>
</dbReference>
<dbReference type="PANTHER" id="PTHR39080:SF1">
    <property type="entry name" value="LARGE RIBOSOMAL SUBUNIT PROTEIN BL28A"/>
    <property type="match status" value="1"/>
</dbReference>
<dbReference type="Pfam" id="PF00830">
    <property type="entry name" value="Ribosomal_L28"/>
    <property type="match status" value="1"/>
</dbReference>
<dbReference type="SUPFAM" id="SSF143800">
    <property type="entry name" value="L28p-like"/>
    <property type="match status" value="1"/>
</dbReference>
<sequence>MSRMCEICGKKPMVGNNVSHAHNVNKRRFNPNLQKVRSLQENGQVKKITVCTNCIKSGKIVKP</sequence>
<feature type="chain" id="PRO_1000121619" description="Large ribosomal subunit protein bL28">
    <location>
        <begin position="1"/>
        <end position="63"/>
    </location>
</feature>